<accession>A4QST9</accession>
<accession>G4N5N5</accession>
<protein>
    <recommendedName>
        <fullName>Increased rDNA silencing protein 4</fullName>
    </recommendedName>
</protein>
<gene>
    <name type="primary">IRS4</name>
    <name type="ORF">MGG_05273</name>
</gene>
<reference key="1">
    <citation type="journal article" date="2005" name="Nature">
        <title>The genome sequence of the rice blast fungus Magnaporthe grisea.</title>
        <authorList>
            <person name="Dean R.A."/>
            <person name="Talbot N.J."/>
            <person name="Ebbole D.J."/>
            <person name="Farman M.L."/>
            <person name="Mitchell T.K."/>
            <person name="Orbach M.J."/>
            <person name="Thon M.R."/>
            <person name="Kulkarni R."/>
            <person name="Xu J.-R."/>
            <person name="Pan H."/>
            <person name="Read N.D."/>
            <person name="Lee Y.-H."/>
            <person name="Carbone I."/>
            <person name="Brown D."/>
            <person name="Oh Y.Y."/>
            <person name="Donofrio N."/>
            <person name="Jeong J.S."/>
            <person name="Soanes D.M."/>
            <person name="Djonovic S."/>
            <person name="Kolomiets E."/>
            <person name="Rehmeyer C."/>
            <person name="Li W."/>
            <person name="Harding M."/>
            <person name="Kim S."/>
            <person name="Lebrun M.-H."/>
            <person name="Bohnert H."/>
            <person name="Coughlan S."/>
            <person name="Butler J."/>
            <person name="Calvo S.E."/>
            <person name="Ma L.-J."/>
            <person name="Nicol R."/>
            <person name="Purcell S."/>
            <person name="Nusbaum C."/>
            <person name="Galagan J.E."/>
            <person name="Birren B.W."/>
        </authorList>
    </citation>
    <scope>NUCLEOTIDE SEQUENCE [LARGE SCALE GENOMIC DNA]</scope>
    <source>
        <strain>70-15 / ATCC MYA-4617 / FGSC 8958</strain>
    </source>
</reference>
<organism>
    <name type="scientific">Pyricularia oryzae (strain 70-15 / ATCC MYA-4617 / FGSC 8958)</name>
    <name type="common">Rice blast fungus</name>
    <name type="synonym">Magnaporthe oryzae</name>
    <dbReference type="NCBI Taxonomy" id="242507"/>
    <lineage>
        <taxon>Eukaryota</taxon>
        <taxon>Fungi</taxon>
        <taxon>Dikarya</taxon>
        <taxon>Ascomycota</taxon>
        <taxon>Pezizomycotina</taxon>
        <taxon>Sordariomycetes</taxon>
        <taxon>Sordariomycetidae</taxon>
        <taxon>Magnaporthales</taxon>
        <taxon>Pyriculariaceae</taxon>
        <taxon>Pyricularia</taxon>
    </lineage>
</organism>
<feature type="chain" id="PRO_0000308760" description="Increased rDNA silencing protein 4">
    <location>
        <begin position="1"/>
        <end position="680"/>
    </location>
</feature>
<feature type="domain" description="EH" evidence="2">
    <location>
        <begin position="568"/>
        <end position="674"/>
    </location>
</feature>
<feature type="region of interest" description="Disordered" evidence="3">
    <location>
        <begin position="1"/>
        <end position="341"/>
    </location>
</feature>
<feature type="region of interest" description="Disordered" evidence="3">
    <location>
        <begin position="361"/>
        <end position="451"/>
    </location>
</feature>
<feature type="region of interest" description="Disordered" evidence="3">
    <location>
        <begin position="466"/>
        <end position="563"/>
    </location>
</feature>
<feature type="compositionally biased region" description="Polar residues" evidence="3">
    <location>
        <begin position="14"/>
        <end position="25"/>
    </location>
</feature>
<feature type="compositionally biased region" description="Low complexity" evidence="3">
    <location>
        <begin position="65"/>
        <end position="76"/>
    </location>
</feature>
<feature type="compositionally biased region" description="Polar residues" evidence="3">
    <location>
        <begin position="97"/>
        <end position="110"/>
    </location>
</feature>
<feature type="compositionally biased region" description="Low complexity" evidence="3">
    <location>
        <begin position="130"/>
        <end position="145"/>
    </location>
</feature>
<feature type="compositionally biased region" description="Acidic residues" evidence="3">
    <location>
        <begin position="193"/>
        <end position="204"/>
    </location>
</feature>
<feature type="compositionally biased region" description="Basic and acidic residues" evidence="3">
    <location>
        <begin position="227"/>
        <end position="236"/>
    </location>
</feature>
<feature type="compositionally biased region" description="Basic residues" evidence="3">
    <location>
        <begin position="272"/>
        <end position="281"/>
    </location>
</feature>
<feature type="compositionally biased region" description="Basic and acidic residues" evidence="3">
    <location>
        <begin position="282"/>
        <end position="305"/>
    </location>
</feature>
<feature type="compositionally biased region" description="Polar residues" evidence="3">
    <location>
        <begin position="311"/>
        <end position="324"/>
    </location>
</feature>
<feature type="compositionally biased region" description="Low complexity" evidence="3">
    <location>
        <begin position="384"/>
        <end position="402"/>
    </location>
</feature>
<feature type="compositionally biased region" description="Basic and acidic residues" evidence="3">
    <location>
        <begin position="413"/>
        <end position="423"/>
    </location>
</feature>
<feature type="compositionally biased region" description="Low complexity" evidence="3">
    <location>
        <begin position="426"/>
        <end position="445"/>
    </location>
</feature>
<feature type="compositionally biased region" description="Basic and acidic residues" evidence="3">
    <location>
        <begin position="525"/>
        <end position="534"/>
    </location>
</feature>
<feature type="compositionally biased region" description="Basic residues" evidence="3">
    <location>
        <begin position="535"/>
        <end position="560"/>
    </location>
</feature>
<comment type="function">
    <text evidence="1">Positive regulator of phosphatidylinositol 4,5-bisphosphate turnover and negatively regulates signaling through the cell integrity pathway. Involved in rDNA silencing (By similarity).</text>
</comment>
<comment type="similarity">
    <text evidence="4">Belongs to the IRS4 family.</text>
</comment>
<keyword id="KW-0443">Lipid metabolism</keyword>
<keyword id="KW-1185">Reference proteome</keyword>
<name>IRS4_PYRO7</name>
<sequence length="680" mass="74009">MTIMTSPAHRPPASSLSIPHEQAQSAALKGASLAFQKQLDASKKKASPPGPNHNNKLTTDPRGGALVAATSAASLSNQTTGGSSVADHHHGVPEHATLSSRLAQLQQRSGSPHLRPPGNAGGPRSASFIAATLAASRSTSPSPSRKNSVVTPQEQRRRAGAHSRASSVGSLRLTSPSNLGPSPGQGVDYGGYDGEDDADLDHDEDTGFRRLGRRKVVAETPTLPAREQSRRRDGDPVKSPSPVRDTEVPQPRRKVIDRVPEQEEPASPVQKPRPKPKPKPKPKPEKIIKTEPRAAPEPVESKRAEQYPGSEPTSPSIRRASVQQPKPKVARAQPARTPIKAYHSQKEIQVLSRILMPKDVDDIDCGPLTLDGAHGPPFRERVDSISSDDTFFSTSSGQGRRAPTPPPPRRIRSVRETPSRPHSEATTPSSQQRSTSSQSKQTPTSANRSSLALDSLTNAIVASSLASARHTPASRSQTPAPVPVPSRKRNDRLASNLTGGGMSRSHSRSPPKKQGMLTTLRAPHSKSDDEEARKHKERHRKRGPLGGKKHVHHEGSRRRWRDSVTAEERRRYEALWASNRGLLLPPKDGGVGQQHQQQQPEDLVANVVVRDLWSRSRLPHDELAEVWDLVDLGRRGSLSKEEFVVGMWLIDMRLRGRKIPPRVSQSVWDSVKGLRVPAPA</sequence>
<proteinExistence type="inferred from homology"/>
<dbReference type="EMBL" id="CM001233">
    <property type="protein sequence ID" value="EHA53025.1"/>
    <property type="molecule type" value="Genomic_DNA"/>
</dbReference>
<dbReference type="RefSeq" id="XP_003712832.1">
    <property type="nucleotide sequence ID" value="XM_003712784.1"/>
</dbReference>
<dbReference type="SMR" id="A4QST9"/>
<dbReference type="STRING" id="242507.A4QST9"/>
<dbReference type="EnsemblFungi" id="MGG_05273T0">
    <property type="protein sequence ID" value="MGG_05273T0"/>
    <property type="gene ID" value="MGG_05273"/>
</dbReference>
<dbReference type="GeneID" id="2675716"/>
<dbReference type="KEGG" id="mgr:MGG_05273"/>
<dbReference type="VEuPathDB" id="FungiDB:MGG_05273"/>
<dbReference type="eggNOG" id="KOG0998">
    <property type="taxonomic scope" value="Eukaryota"/>
</dbReference>
<dbReference type="HOGENOM" id="CLU_014603_0_0_1"/>
<dbReference type="InParanoid" id="A4QST9"/>
<dbReference type="OMA" id="AEVWELV"/>
<dbReference type="OrthoDB" id="10045710at2759"/>
<dbReference type="Proteomes" id="UP000009058">
    <property type="component" value="Chromosome 3"/>
</dbReference>
<dbReference type="GO" id="GO:0005737">
    <property type="term" value="C:cytoplasm"/>
    <property type="evidence" value="ECO:0007669"/>
    <property type="project" value="TreeGrafter"/>
</dbReference>
<dbReference type="GO" id="GO:0006629">
    <property type="term" value="P:lipid metabolic process"/>
    <property type="evidence" value="ECO:0007669"/>
    <property type="project" value="UniProtKB-KW"/>
</dbReference>
<dbReference type="CDD" id="cd00052">
    <property type="entry name" value="EH"/>
    <property type="match status" value="1"/>
</dbReference>
<dbReference type="Gene3D" id="1.10.238.10">
    <property type="entry name" value="EF-hand"/>
    <property type="match status" value="1"/>
</dbReference>
<dbReference type="InterPro" id="IPR011992">
    <property type="entry name" value="EF-hand-dom_pair"/>
</dbReference>
<dbReference type="InterPro" id="IPR000261">
    <property type="entry name" value="EH_dom"/>
</dbReference>
<dbReference type="PANTHER" id="PTHR11216:SF31">
    <property type="entry name" value="AT21416P"/>
    <property type="match status" value="1"/>
</dbReference>
<dbReference type="PANTHER" id="PTHR11216">
    <property type="entry name" value="EH DOMAIN"/>
    <property type="match status" value="1"/>
</dbReference>
<dbReference type="Pfam" id="PF12763">
    <property type="entry name" value="EH"/>
    <property type="match status" value="1"/>
</dbReference>
<dbReference type="SMART" id="SM00027">
    <property type="entry name" value="EH"/>
    <property type="match status" value="1"/>
</dbReference>
<dbReference type="SUPFAM" id="SSF47473">
    <property type="entry name" value="EF-hand"/>
    <property type="match status" value="1"/>
</dbReference>
<dbReference type="PROSITE" id="PS50031">
    <property type="entry name" value="EH"/>
    <property type="match status" value="1"/>
</dbReference>
<evidence type="ECO:0000250" key="1"/>
<evidence type="ECO:0000255" key="2">
    <source>
        <dbReference type="PROSITE-ProRule" id="PRU00077"/>
    </source>
</evidence>
<evidence type="ECO:0000256" key="3">
    <source>
        <dbReference type="SAM" id="MobiDB-lite"/>
    </source>
</evidence>
<evidence type="ECO:0000305" key="4"/>